<proteinExistence type="evidence at protein level"/>
<evidence type="ECO:0000255" key="1">
    <source>
        <dbReference type="PROSITE-ProRule" id="PRU00159"/>
    </source>
</evidence>
<evidence type="ECO:0000255" key="2">
    <source>
        <dbReference type="PROSITE-ProRule" id="PRU10027"/>
    </source>
</evidence>
<evidence type="ECO:0000256" key="3">
    <source>
        <dbReference type="SAM" id="MobiDB-lite"/>
    </source>
</evidence>
<evidence type="ECO:0000269" key="4">
    <source>
    </source>
</evidence>
<evidence type="ECO:0000269" key="5">
    <source>
    </source>
</evidence>
<evidence type="ECO:0000269" key="6">
    <source>
    </source>
</evidence>
<evidence type="ECO:0000269" key="7">
    <source>
    </source>
</evidence>
<evidence type="ECO:0000269" key="8">
    <source>
    </source>
</evidence>
<evidence type="ECO:0000269" key="9">
    <source>
    </source>
</evidence>
<evidence type="ECO:0000305" key="10"/>
<comment type="function">
    <text evidence="4 5 6 8">Serine/threonine-protein kinase involved in somatic mitosis and female meiosis (PubMed:16230526). Required for spindle organization in mitosis, and for the establishment or maintenance of meiosis-specific chromosomal configurations, including the prophase I karyosome and the metaphase I spindle (PubMed:15078818, PubMed:16301329). Specifically phosphorylates nucleosomal H2A on 'Thr-119' (PubMed:15078818). Required for the development and organization of indirect flight muscle sarcomeres by regulating the formation of M line and H zone and the correct assembly of thick and thin filaments in the sarcomere (PubMed:26251439).</text>
</comment>
<comment type="catalytic activity">
    <reaction evidence="4">
        <text>L-seryl-[protein] + ATP = O-phospho-L-seryl-[protein] + ADP + H(+)</text>
        <dbReference type="Rhea" id="RHEA:17989"/>
        <dbReference type="Rhea" id="RHEA-COMP:9863"/>
        <dbReference type="Rhea" id="RHEA-COMP:11604"/>
        <dbReference type="ChEBI" id="CHEBI:15378"/>
        <dbReference type="ChEBI" id="CHEBI:29999"/>
        <dbReference type="ChEBI" id="CHEBI:30616"/>
        <dbReference type="ChEBI" id="CHEBI:83421"/>
        <dbReference type="ChEBI" id="CHEBI:456216"/>
        <dbReference type="EC" id="2.7.11.1"/>
    </reaction>
</comment>
<comment type="catalytic activity">
    <reaction evidence="4">
        <text>L-threonyl-[protein] + ATP = O-phospho-L-threonyl-[protein] + ADP + H(+)</text>
        <dbReference type="Rhea" id="RHEA:46608"/>
        <dbReference type="Rhea" id="RHEA-COMP:11060"/>
        <dbReference type="Rhea" id="RHEA-COMP:11605"/>
        <dbReference type="ChEBI" id="CHEBI:15378"/>
        <dbReference type="ChEBI" id="CHEBI:30013"/>
        <dbReference type="ChEBI" id="CHEBI:30616"/>
        <dbReference type="ChEBI" id="CHEBI:61977"/>
        <dbReference type="ChEBI" id="CHEBI:456216"/>
        <dbReference type="EC" id="2.7.11.1"/>
    </reaction>
</comment>
<comment type="cofactor">
    <cofactor evidence="4">
        <name>Mg(2+)</name>
        <dbReference type="ChEBI" id="CHEBI:18420"/>
    </cofactor>
</comment>
<comment type="subunit">
    <text evidence="8 9">May interact with Unc-89 (via protein kinase domain 1) (PubMed:26251439). Interacts with L(2)gl (PubMed:31735666).</text>
</comment>
<comment type="subcellular location">
    <subcellularLocation>
        <location evidence="4">Cytoplasm</location>
    </subcellularLocation>
    <subcellularLocation>
        <location evidence="4">Nucleus</location>
    </subcellularLocation>
    <subcellularLocation>
        <location evidence="4">Chromosome</location>
    </subcellularLocation>
    <subcellularLocation>
        <location evidence="8">Cytoplasm</location>
        <location evidence="8">Myofibril</location>
        <location evidence="8">Sarcomere</location>
        <location evidence="8">Z line</location>
    </subcellularLocation>
    <subcellularLocation>
        <location evidence="8">Cytoplasm</location>
        <location evidence="8">Myofibril</location>
        <location evidence="8">Sarcomere</location>
        <location evidence="8">M line</location>
    </subcellularLocation>
    <text evidence="4 8">Chromatin-associated during mitosis (PubMed:15078818). In indirect flight muscle, colocalizes with sls isoform A (kettin) to the sarcomere Z lines and appears to be weakly distributed across the sarcomere (PubMed:26251439). More rarely, localizes to M lines (PubMed:26251439).</text>
</comment>
<comment type="tissue specificity">
    <text evidence="5 6 8">Expressed in ovaries (at protein level) (PubMed:16230526, PubMed:16301329). Expressed in indirect flight muscle (IFM) (at protein level) (PubMed:26251439).</text>
</comment>
<comment type="developmental stage">
    <text evidence="4">Present throughout development, with highest level in early embryo (at protein level).</text>
</comment>
<comment type="PTM">
    <text evidence="6 7">Phosphorylated during mitosis and female meiosis.</text>
</comment>
<comment type="disruption phenotype">
    <text evidence="8">RNAi-mediated knockdown in muscles causes 91 percent lethality at the early pupal stage and the few surviving animals cannot fly. Severe defects in the indirect flight muscle structure characterized by narrower and wavy myofibrils and abnormal positioning of sarcomere Z line, M line and H line. Although the spacing between Z line and M lines stays regular, in less affected myobrils Z lines and M lines appear fragmented, Z lines are diffused at the edges and sarcomere length is shorter. In the more affected myofibrils, rudimentary Z lines are shifted into the region of thick and thin filament overlap and are by-passed by abnormally long filaments and H zones fail to localize to the middle of the sarcomere. Localization of unc-89/obscurin to M lines and localization of kettin (sls isoform A) to Z line is not affected.</text>
</comment>
<comment type="similarity">
    <text evidence="10">Belongs to the protein kinase superfamily. CK1 Ser/Thr protein kinase family. VRK subfamily.</text>
</comment>
<comment type="sequence caution" evidence="10">
    <conflict type="erroneous initiation">
        <sequence resource="EMBL-CDS" id="AAD46857"/>
    </conflict>
</comment>
<keyword id="KW-0067">ATP-binding</keyword>
<keyword id="KW-0131">Cell cycle</keyword>
<keyword id="KW-0132">Cell division</keyword>
<keyword id="KW-0156">Chromatin regulator</keyword>
<keyword id="KW-0158">Chromosome</keyword>
<keyword id="KW-0963">Cytoplasm</keyword>
<keyword id="KW-0903">Direct protein sequencing</keyword>
<keyword id="KW-0418">Kinase</keyword>
<keyword id="KW-0460">Magnesium</keyword>
<keyword id="KW-0469">Meiosis</keyword>
<keyword id="KW-0479">Metal-binding</keyword>
<keyword id="KW-0498">Mitosis</keyword>
<keyword id="KW-0547">Nucleotide-binding</keyword>
<keyword id="KW-0539">Nucleus</keyword>
<keyword id="KW-0597">Phosphoprotein</keyword>
<keyword id="KW-1185">Reference proteome</keyword>
<keyword id="KW-0723">Serine/threonine-protein kinase</keyword>
<keyword id="KW-0808">Transferase</keyword>
<sequence length="599" mass="65994">MPRVAKPKAAAPAKKVVSAKKAKSKLYKMPEKVKEGTVFTDLAKGQWRIGPSIGVGGFGEIYAACKVGEKNYDAVVKCEPHGNGPLFVEMHFYLRNAKLEDIKQFMQKHGLKSLGMPYILANGSVEVNGEKHRFIVMPRYGSDLTKFLEQNGKRLPEGTVYRLAIQMLDVYQYMHSNGYVHADLKAANILLGLEKGGAAQAYLVDFGLASHFVTGDFKPDPKKMHNGTIEYTSRDAHLGVPTRRADLEILGYNLIEWLGAELPWVTQKLLAVPPKVQKAKEAFMDNIGESLKTLFPKGVPPPIGDFMKYVSKLTHNQEPDYDKCRSWFSSALKQLKIPNNGDLDFKMKPQTSSNNNLSPPGTSKAATARKAKKIDSPVLNSSLDEKISASEDDEEEEEKSHRKKTAKKVTPSARNAKVSPLKRVADSSPPSQKRVKTEPKSTPRERATPKASPKPRSTPKASPKPQTPTAARLRTPNAKINFSPSISLRGRPGGKTVINDDLTPQPRSKKTYEFNFELDVSMDANVIVNVKRKKKADQDKATAVDSRTPSSRSALASSSKEEASPVTRVNLRKVNGHGDSSTPGRSPRTPAVTVRKYQG</sequence>
<organism>
    <name type="scientific">Drosophila melanogaster</name>
    <name type="common">Fruit fly</name>
    <dbReference type="NCBI Taxonomy" id="7227"/>
    <lineage>
        <taxon>Eukaryota</taxon>
        <taxon>Metazoa</taxon>
        <taxon>Ecdysozoa</taxon>
        <taxon>Arthropoda</taxon>
        <taxon>Hexapoda</taxon>
        <taxon>Insecta</taxon>
        <taxon>Pterygota</taxon>
        <taxon>Neoptera</taxon>
        <taxon>Endopterygota</taxon>
        <taxon>Diptera</taxon>
        <taxon>Brachycera</taxon>
        <taxon>Muscomorpha</taxon>
        <taxon>Ephydroidea</taxon>
        <taxon>Drosophilidae</taxon>
        <taxon>Drosophila</taxon>
        <taxon>Sophophora</taxon>
    </lineage>
</organism>
<feature type="chain" id="PRO_0000086441" description="Nucleosomal histone kinase 1">
    <location>
        <begin position="1"/>
        <end position="599"/>
    </location>
</feature>
<feature type="domain" description="Protein kinase" evidence="1">
    <location>
        <begin position="47"/>
        <end position="328"/>
    </location>
</feature>
<feature type="region of interest" description="Disordered" evidence="3">
    <location>
        <begin position="340"/>
        <end position="507"/>
    </location>
</feature>
<feature type="region of interest" description="Disordered" evidence="3">
    <location>
        <begin position="532"/>
        <end position="599"/>
    </location>
</feature>
<feature type="compositionally biased region" description="Polar residues" evidence="3">
    <location>
        <begin position="349"/>
        <end position="361"/>
    </location>
</feature>
<feature type="compositionally biased region" description="Basic and acidic residues" evidence="3">
    <location>
        <begin position="435"/>
        <end position="448"/>
    </location>
</feature>
<feature type="compositionally biased region" description="Low complexity" evidence="3">
    <location>
        <begin position="546"/>
        <end position="558"/>
    </location>
</feature>
<feature type="active site" description="Proton acceptor" evidence="1 2">
    <location>
        <position position="183"/>
    </location>
</feature>
<feature type="binding site" evidence="1">
    <location>
        <begin position="53"/>
        <end position="61"/>
    </location>
    <ligand>
        <name>ATP</name>
        <dbReference type="ChEBI" id="CHEBI:30616"/>
    </ligand>
</feature>
<feature type="binding site" evidence="1">
    <location>
        <position position="77"/>
    </location>
    <ligand>
        <name>ATP</name>
        <dbReference type="ChEBI" id="CHEBI:30616"/>
    </ligand>
</feature>
<feature type="modified residue" description="Phosphoserine" evidence="7">
    <location>
        <position position="376"/>
    </location>
</feature>
<feature type="modified residue" description="Phosphoserine" evidence="7">
    <location>
        <position position="381"/>
    </location>
</feature>
<feature type="modified residue" description="Phosphoserine" evidence="7">
    <location>
        <position position="382"/>
    </location>
</feature>
<feature type="modified residue" description="Phosphoserine" evidence="7">
    <location>
        <position position="388"/>
    </location>
</feature>
<feature type="modified residue" description="Phosphoserine" evidence="7">
    <location>
        <position position="390"/>
    </location>
</feature>
<feature type="modified residue" description="Phosphoserine" evidence="7">
    <location>
        <position position="483"/>
    </location>
</feature>
<feature type="modified residue" description="Phosphoserine" evidence="7">
    <location>
        <position position="564"/>
    </location>
</feature>
<feature type="modified residue" description="Phosphoserine" evidence="7">
    <location>
        <position position="586"/>
    </location>
</feature>
<feature type="modified residue" description="Phosphothreonine" evidence="7">
    <location>
        <position position="589"/>
    </location>
</feature>
<feature type="mutagenesis site" description="In Z3-0437; induces female and male sterility and abolishes T-119 phosphorylation of H2A in the oocyte." evidence="5">
    <original>P</original>
    <variation>L</variation>
    <location>
        <position position="117"/>
    </location>
</feature>
<reference key="1">
    <citation type="journal article" date="2000" name="Science">
        <title>The genome sequence of Drosophila melanogaster.</title>
        <authorList>
            <person name="Adams M.D."/>
            <person name="Celniker S.E."/>
            <person name="Holt R.A."/>
            <person name="Evans C.A."/>
            <person name="Gocayne J.D."/>
            <person name="Amanatides P.G."/>
            <person name="Scherer S.E."/>
            <person name="Li P.W."/>
            <person name="Hoskins R.A."/>
            <person name="Galle R.F."/>
            <person name="George R.A."/>
            <person name="Lewis S.E."/>
            <person name="Richards S."/>
            <person name="Ashburner M."/>
            <person name="Henderson S.N."/>
            <person name="Sutton G.G."/>
            <person name="Wortman J.R."/>
            <person name="Yandell M.D."/>
            <person name="Zhang Q."/>
            <person name="Chen L.X."/>
            <person name="Brandon R.C."/>
            <person name="Rogers Y.-H.C."/>
            <person name="Blazej R.G."/>
            <person name="Champe M."/>
            <person name="Pfeiffer B.D."/>
            <person name="Wan K.H."/>
            <person name="Doyle C."/>
            <person name="Baxter E.G."/>
            <person name="Helt G."/>
            <person name="Nelson C.R."/>
            <person name="Miklos G.L.G."/>
            <person name="Abril J.F."/>
            <person name="Agbayani A."/>
            <person name="An H.-J."/>
            <person name="Andrews-Pfannkoch C."/>
            <person name="Baldwin D."/>
            <person name="Ballew R.M."/>
            <person name="Basu A."/>
            <person name="Baxendale J."/>
            <person name="Bayraktaroglu L."/>
            <person name="Beasley E.M."/>
            <person name="Beeson K.Y."/>
            <person name="Benos P.V."/>
            <person name="Berman B.P."/>
            <person name="Bhandari D."/>
            <person name="Bolshakov S."/>
            <person name="Borkova D."/>
            <person name="Botchan M.R."/>
            <person name="Bouck J."/>
            <person name="Brokstein P."/>
            <person name="Brottier P."/>
            <person name="Burtis K.C."/>
            <person name="Busam D.A."/>
            <person name="Butler H."/>
            <person name="Cadieu E."/>
            <person name="Center A."/>
            <person name="Chandra I."/>
            <person name="Cherry J.M."/>
            <person name="Cawley S."/>
            <person name="Dahlke C."/>
            <person name="Davenport L.B."/>
            <person name="Davies P."/>
            <person name="de Pablos B."/>
            <person name="Delcher A."/>
            <person name="Deng Z."/>
            <person name="Mays A.D."/>
            <person name="Dew I."/>
            <person name="Dietz S.M."/>
            <person name="Dodson K."/>
            <person name="Doup L.E."/>
            <person name="Downes M."/>
            <person name="Dugan-Rocha S."/>
            <person name="Dunkov B.C."/>
            <person name="Dunn P."/>
            <person name="Durbin K.J."/>
            <person name="Evangelista C.C."/>
            <person name="Ferraz C."/>
            <person name="Ferriera S."/>
            <person name="Fleischmann W."/>
            <person name="Fosler C."/>
            <person name="Gabrielian A.E."/>
            <person name="Garg N.S."/>
            <person name="Gelbart W.M."/>
            <person name="Glasser K."/>
            <person name="Glodek A."/>
            <person name="Gong F."/>
            <person name="Gorrell J.H."/>
            <person name="Gu Z."/>
            <person name="Guan P."/>
            <person name="Harris M."/>
            <person name="Harris N.L."/>
            <person name="Harvey D.A."/>
            <person name="Heiman T.J."/>
            <person name="Hernandez J.R."/>
            <person name="Houck J."/>
            <person name="Hostin D."/>
            <person name="Houston K.A."/>
            <person name="Howland T.J."/>
            <person name="Wei M.-H."/>
            <person name="Ibegwam C."/>
            <person name="Jalali M."/>
            <person name="Kalush F."/>
            <person name="Karpen G.H."/>
            <person name="Ke Z."/>
            <person name="Kennison J.A."/>
            <person name="Ketchum K.A."/>
            <person name="Kimmel B.E."/>
            <person name="Kodira C.D."/>
            <person name="Kraft C.L."/>
            <person name="Kravitz S."/>
            <person name="Kulp D."/>
            <person name="Lai Z."/>
            <person name="Lasko P."/>
            <person name="Lei Y."/>
            <person name="Levitsky A.A."/>
            <person name="Li J.H."/>
            <person name="Li Z."/>
            <person name="Liang Y."/>
            <person name="Lin X."/>
            <person name="Liu X."/>
            <person name="Mattei B."/>
            <person name="McIntosh T.C."/>
            <person name="McLeod M.P."/>
            <person name="McPherson D."/>
            <person name="Merkulov G."/>
            <person name="Milshina N.V."/>
            <person name="Mobarry C."/>
            <person name="Morris J."/>
            <person name="Moshrefi A."/>
            <person name="Mount S.M."/>
            <person name="Moy M."/>
            <person name="Murphy B."/>
            <person name="Murphy L."/>
            <person name="Muzny D.M."/>
            <person name="Nelson D.L."/>
            <person name="Nelson D.R."/>
            <person name="Nelson K.A."/>
            <person name="Nixon K."/>
            <person name="Nusskern D.R."/>
            <person name="Pacleb J.M."/>
            <person name="Palazzolo M."/>
            <person name="Pittman G.S."/>
            <person name="Pan S."/>
            <person name="Pollard J."/>
            <person name="Puri V."/>
            <person name="Reese M.G."/>
            <person name="Reinert K."/>
            <person name="Remington K."/>
            <person name="Saunders R.D.C."/>
            <person name="Scheeler F."/>
            <person name="Shen H."/>
            <person name="Shue B.C."/>
            <person name="Siden-Kiamos I."/>
            <person name="Simpson M."/>
            <person name="Skupski M.P."/>
            <person name="Smith T.J."/>
            <person name="Spier E."/>
            <person name="Spradling A.C."/>
            <person name="Stapleton M."/>
            <person name="Strong R."/>
            <person name="Sun E."/>
            <person name="Svirskas R."/>
            <person name="Tector C."/>
            <person name="Turner R."/>
            <person name="Venter E."/>
            <person name="Wang A.H."/>
            <person name="Wang X."/>
            <person name="Wang Z.-Y."/>
            <person name="Wassarman D.A."/>
            <person name="Weinstock G.M."/>
            <person name="Weissenbach J."/>
            <person name="Williams S.M."/>
            <person name="Woodage T."/>
            <person name="Worley K.C."/>
            <person name="Wu D."/>
            <person name="Yang S."/>
            <person name="Yao Q.A."/>
            <person name="Ye J."/>
            <person name="Yeh R.-F."/>
            <person name="Zaveri J.S."/>
            <person name="Zhan M."/>
            <person name="Zhang G."/>
            <person name="Zhao Q."/>
            <person name="Zheng L."/>
            <person name="Zheng X.H."/>
            <person name="Zhong F.N."/>
            <person name="Zhong W."/>
            <person name="Zhou X."/>
            <person name="Zhu S.C."/>
            <person name="Zhu X."/>
            <person name="Smith H.O."/>
            <person name="Gibbs R.A."/>
            <person name="Myers E.W."/>
            <person name="Rubin G.M."/>
            <person name="Venter J.C."/>
        </authorList>
    </citation>
    <scope>NUCLEOTIDE SEQUENCE [LARGE SCALE GENOMIC DNA]</scope>
    <source>
        <strain>Berkeley</strain>
    </source>
</reference>
<reference key="2">
    <citation type="journal article" date="2002" name="Genome Biol.">
        <title>Annotation of the Drosophila melanogaster euchromatic genome: a systematic review.</title>
        <authorList>
            <person name="Misra S."/>
            <person name="Crosby M.A."/>
            <person name="Mungall C.J."/>
            <person name="Matthews B.B."/>
            <person name="Campbell K.S."/>
            <person name="Hradecky P."/>
            <person name="Huang Y."/>
            <person name="Kaminker J.S."/>
            <person name="Millburn G.H."/>
            <person name="Prochnik S.E."/>
            <person name="Smith C.D."/>
            <person name="Tupy J.L."/>
            <person name="Whitfield E.J."/>
            <person name="Bayraktaroglu L."/>
            <person name="Berman B.P."/>
            <person name="Bettencourt B.R."/>
            <person name="Celniker S.E."/>
            <person name="de Grey A.D.N.J."/>
            <person name="Drysdale R.A."/>
            <person name="Harris N.L."/>
            <person name="Richter J."/>
            <person name="Russo S."/>
            <person name="Schroeder A.J."/>
            <person name="Shu S.Q."/>
            <person name="Stapleton M."/>
            <person name="Yamada C."/>
            <person name="Ashburner M."/>
            <person name="Gelbart W.M."/>
            <person name="Rubin G.M."/>
            <person name="Lewis S.E."/>
        </authorList>
    </citation>
    <scope>GENOME REANNOTATION</scope>
    <source>
        <strain>Berkeley</strain>
    </source>
</reference>
<reference key="3">
    <citation type="journal article" date="2002" name="Genome Biol.">
        <title>A Drosophila full-length cDNA resource.</title>
        <authorList>
            <person name="Stapleton M."/>
            <person name="Carlson J.W."/>
            <person name="Brokstein P."/>
            <person name="Yu C."/>
            <person name="Champe M."/>
            <person name="George R.A."/>
            <person name="Guarin H."/>
            <person name="Kronmiller B."/>
            <person name="Pacleb J.M."/>
            <person name="Park S."/>
            <person name="Wan K.H."/>
            <person name="Rubin G.M."/>
            <person name="Celniker S.E."/>
        </authorList>
    </citation>
    <scope>NUCLEOTIDE SEQUENCE [LARGE SCALE MRNA]</scope>
    <source>
        <strain>Berkeley</strain>
        <tissue>Embryo</tissue>
    </source>
</reference>
<reference key="4">
    <citation type="journal article" date="2004" name="Genes Dev.">
        <title>Nucleosomal histone kinase-1 phosphorylates H2A Thr 119 during mitosis in the early Drosophila embryo.</title>
        <authorList>
            <person name="Aihara H."/>
            <person name="Nakagawa T."/>
            <person name="Yasui K."/>
            <person name="Ohta T."/>
            <person name="Hirose S."/>
            <person name="Dhomae N."/>
            <person name="Takio K."/>
            <person name="Kaneko M."/>
            <person name="Takeshima Y."/>
            <person name="Muramatsu M."/>
            <person name="Ito T."/>
        </authorList>
    </citation>
    <scope>PROTEIN SEQUENCE OF 35-44 AND 186-195</scope>
    <scope>FUNCTION</scope>
    <scope>CATALYTIC ACTIVITY</scope>
    <scope>COFACTOR</scope>
    <scope>SUBCELLULAR LOCATION</scope>
    <scope>DEVELOPMENTAL STAGE</scope>
    <source>
        <strain>Berkeley</strain>
        <tissue>Embryo</tissue>
    </source>
</reference>
<reference key="5">
    <citation type="journal article" date="2005" name="Genes Dev.">
        <title>A histone code in meiosis: the histone kinase, NHK-1, is required for proper chromosomal architecture in Drosophila oocytes.</title>
        <authorList>
            <person name="Ivanovska I."/>
            <person name="Khandan T."/>
            <person name="Ito T."/>
            <person name="Orr-Weaver T.L."/>
        </authorList>
    </citation>
    <scope>FUNCTION</scope>
    <scope>MUTAGENESIS OF PRO-117</scope>
    <scope>TISSUE SPECIFICITY</scope>
</reference>
<reference key="6">
    <citation type="journal article" date="2005" name="J. Cell Biol.">
        <title>The conserved kinase NHK-1 is essential for mitotic progression and unifying acentrosomal meiotic spindles in Drosophila melanogaster.</title>
        <authorList>
            <person name="Cullen C.F."/>
            <person name="Brittle A.L."/>
            <person name="Ito T."/>
            <person name="Ohkura H."/>
        </authorList>
    </citation>
    <scope>FUNCTION</scope>
    <scope>TISSUE SPECIFICITY</scope>
    <scope>PHOSPHORYLATION</scope>
</reference>
<reference key="7">
    <citation type="journal article" date="2008" name="J. Proteome Res.">
        <title>Phosphoproteome analysis of Drosophila melanogaster embryos.</title>
        <authorList>
            <person name="Zhai B."/>
            <person name="Villen J."/>
            <person name="Beausoleil S.A."/>
            <person name="Mintseris J."/>
            <person name="Gygi S.P."/>
        </authorList>
    </citation>
    <scope>PHOSPHORYLATION [LARGE SCALE ANALYSIS] AT SER-376; SER-381; SER-382; SER-388; SER-390; SER-483; SER-564; SER-586 AND THR-589</scope>
    <scope>IDENTIFICATION BY MASS SPECTROMETRY</scope>
    <source>
        <tissue>Embryo</tissue>
    </source>
</reference>
<reference key="8">
    <citation type="journal article" date="2015" name="J. Cell Sci.">
        <title>Binding partners of the kinase domains in Drosophila obscurin and their effect on the structure of the flight muscle.</title>
        <authorList>
            <person name="Katzemich A."/>
            <person name="West R.J."/>
            <person name="Fukuzawa A."/>
            <person name="Sweeney S.T."/>
            <person name="Gautel M."/>
            <person name="Sparrow J."/>
            <person name="Bullard B."/>
        </authorList>
    </citation>
    <scope>FUNCTION</scope>
    <scope>INTERACTION WITH UNC-89</scope>
    <scope>SUBCELLULAR LOCATION</scope>
    <scope>TISSUE SPECIFICITY</scope>
    <scope>DISRUPTION PHENOTYPE</scope>
</reference>
<reference key="9">
    <citation type="journal article" date="2019" name="Dev. Cell">
        <title>Mutations in ANKLE2, a ZIKA Virus Target, Disrupt an Asymmetric Cell Division Pathway in Drosophila Neuroblasts to Cause Microcephaly.</title>
        <authorList>
            <person name="Link N."/>
            <person name="Chung H."/>
            <person name="Jolly A."/>
            <person name="Withers M."/>
            <person name="Tepe B."/>
            <person name="Arenkiel B.R."/>
            <person name="Shah P.S."/>
            <person name="Krogan N.J."/>
            <person name="Aydin H."/>
            <person name="Geckinli B.B."/>
            <person name="Tos T."/>
            <person name="Isikay S."/>
            <person name="Tuysuz B."/>
            <person name="Mochida G.H."/>
            <person name="Thomas A.X."/>
            <person name="Clark R.D."/>
            <person name="Mirzaa G.M."/>
            <person name="Lupski J.R."/>
            <person name="Bellen H.J."/>
        </authorList>
    </citation>
    <scope>INTERACTION WITH L(2)GL</scope>
</reference>
<dbReference type="EC" id="2.7.11.1" evidence="4"/>
<dbReference type="EMBL" id="AE014297">
    <property type="protein sequence ID" value="AAF56630.2"/>
    <property type="molecule type" value="Genomic_DNA"/>
</dbReference>
<dbReference type="EMBL" id="AF160917">
    <property type="protein sequence ID" value="AAD46857.2"/>
    <property type="status" value="ALT_INIT"/>
    <property type="molecule type" value="mRNA"/>
</dbReference>
<dbReference type="RefSeq" id="NP_651508.1">
    <property type="nucleotide sequence ID" value="NM_143251.1"/>
</dbReference>
<dbReference type="RefSeq" id="NP_733171.1">
    <property type="nucleotide sequence ID" value="NM_170292.2"/>
</dbReference>
<dbReference type="SMR" id="Q7KRY6"/>
<dbReference type="BioGRID" id="68119">
    <property type="interactions" value="16"/>
</dbReference>
<dbReference type="FunCoup" id="Q7KRY6">
    <property type="interactions" value="1393"/>
</dbReference>
<dbReference type="IntAct" id="Q7KRY6">
    <property type="interactions" value="44"/>
</dbReference>
<dbReference type="STRING" id="7227.FBpp0084465"/>
<dbReference type="GlyGen" id="Q7KRY6">
    <property type="glycosylation" value="2 sites"/>
</dbReference>
<dbReference type="iPTMnet" id="Q7KRY6"/>
<dbReference type="PaxDb" id="7227-FBpp0084465"/>
<dbReference type="EnsemblMetazoa" id="FBtr0085095">
    <property type="protein sequence ID" value="FBpp0084465"/>
    <property type="gene ID" value="FBgn0027889"/>
</dbReference>
<dbReference type="EnsemblMetazoa" id="FBtr0085096">
    <property type="protein sequence ID" value="FBpp0084466"/>
    <property type="gene ID" value="FBgn0027889"/>
</dbReference>
<dbReference type="GeneID" id="43228"/>
<dbReference type="KEGG" id="dme:Dmel_CG6386"/>
<dbReference type="AGR" id="FB:FBgn0027889"/>
<dbReference type="CTD" id="43228"/>
<dbReference type="FlyBase" id="FBgn0027889">
    <property type="gene designation" value="ball"/>
</dbReference>
<dbReference type="VEuPathDB" id="VectorBase:FBgn0027889"/>
<dbReference type="eggNOG" id="KOG1164">
    <property type="taxonomic scope" value="Eukaryota"/>
</dbReference>
<dbReference type="GeneTree" id="ENSGT00940000168643"/>
<dbReference type="HOGENOM" id="CLU_019279_4_2_1"/>
<dbReference type="InParanoid" id="Q7KRY6"/>
<dbReference type="OMA" id="MHSTGYV"/>
<dbReference type="OrthoDB" id="2687620at2759"/>
<dbReference type="PhylomeDB" id="Q7KRY6"/>
<dbReference type="Reactome" id="R-DME-202670">
    <property type="pathway name" value="ERKs are inactivated"/>
</dbReference>
<dbReference type="Reactome" id="R-DME-2995383">
    <property type="pathway name" value="Initiation of Nuclear Envelope (NE) Reformation"/>
</dbReference>
<dbReference type="Reactome" id="R-DME-9013405">
    <property type="pathway name" value="RHOD GTPase cycle"/>
</dbReference>
<dbReference type="BioGRID-ORCS" id="43228">
    <property type="hits" value="0 hits in 3 CRISPR screens"/>
</dbReference>
<dbReference type="GenomeRNAi" id="43228"/>
<dbReference type="PRO" id="PR:Q7KRY6"/>
<dbReference type="Proteomes" id="UP000000803">
    <property type="component" value="Chromosome 3R"/>
</dbReference>
<dbReference type="Bgee" id="FBgn0027889">
    <property type="expression patterns" value="Expressed in cleaving embryo and 51 other cell types or tissues"/>
</dbReference>
<dbReference type="ExpressionAtlas" id="Q7KRY6">
    <property type="expression patterns" value="baseline and differential"/>
</dbReference>
<dbReference type="GO" id="GO:0000785">
    <property type="term" value="C:chromatin"/>
    <property type="evidence" value="ECO:0000314"/>
    <property type="project" value="UniProtKB"/>
</dbReference>
<dbReference type="GO" id="GO:0005737">
    <property type="term" value="C:cytoplasm"/>
    <property type="evidence" value="ECO:0000318"/>
    <property type="project" value="GO_Central"/>
</dbReference>
<dbReference type="GO" id="GO:0031430">
    <property type="term" value="C:M band"/>
    <property type="evidence" value="ECO:0000314"/>
    <property type="project" value="UniProtKB"/>
</dbReference>
<dbReference type="GO" id="GO:0005730">
    <property type="term" value="C:nucleolus"/>
    <property type="evidence" value="ECO:0000314"/>
    <property type="project" value="FlyBase"/>
</dbReference>
<dbReference type="GO" id="GO:0005634">
    <property type="term" value="C:nucleus"/>
    <property type="evidence" value="ECO:0000314"/>
    <property type="project" value="UniProtKB"/>
</dbReference>
<dbReference type="GO" id="GO:0030017">
    <property type="term" value="C:sarcomere"/>
    <property type="evidence" value="ECO:0000314"/>
    <property type="project" value="FlyBase"/>
</dbReference>
<dbReference type="GO" id="GO:0030018">
    <property type="term" value="C:Z disc"/>
    <property type="evidence" value="ECO:0000314"/>
    <property type="project" value="UniProtKB"/>
</dbReference>
<dbReference type="GO" id="GO:0005524">
    <property type="term" value="F:ATP binding"/>
    <property type="evidence" value="ECO:0007669"/>
    <property type="project" value="UniProtKB-KW"/>
</dbReference>
<dbReference type="GO" id="GO:1990244">
    <property type="term" value="F:histone H2AT120 kinase activity"/>
    <property type="evidence" value="ECO:0000314"/>
    <property type="project" value="FlyBase"/>
</dbReference>
<dbReference type="GO" id="GO:0046872">
    <property type="term" value="F:metal ion binding"/>
    <property type="evidence" value="ECO:0007669"/>
    <property type="project" value="UniProtKB-KW"/>
</dbReference>
<dbReference type="GO" id="GO:0004672">
    <property type="term" value="F:protein kinase activity"/>
    <property type="evidence" value="ECO:0000314"/>
    <property type="project" value="FlyBase"/>
</dbReference>
<dbReference type="GO" id="GO:0019901">
    <property type="term" value="F:protein kinase binding"/>
    <property type="evidence" value="ECO:0000353"/>
    <property type="project" value="UniProtKB"/>
</dbReference>
<dbReference type="GO" id="GO:0106310">
    <property type="term" value="F:protein serine kinase activity"/>
    <property type="evidence" value="ECO:0007669"/>
    <property type="project" value="RHEA"/>
</dbReference>
<dbReference type="GO" id="GO:0004674">
    <property type="term" value="F:protein serine/threonine kinase activity"/>
    <property type="evidence" value="ECO:0000318"/>
    <property type="project" value="GO_Central"/>
</dbReference>
<dbReference type="GO" id="GO:0051301">
    <property type="term" value="P:cell division"/>
    <property type="evidence" value="ECO:0007669"/>
    <property type="project" value="UniProtKB-KW"/>
</dbReference>
<dbReference type="GO" id="GO:0030261">
    <property type="term" value="P:chromosome condensation"/>
    <property type="evidence" value="ECO:0000315"/>
    <property type="project" value="FlyBase"/>
</dbReference>
<dbReference type="GO" id="GO:0006974">
    <property type="term" value="P:DNA damage response"/>
    <property type="evidence" value="ECO:0000318"/>
    <property type="project" value="GO_Central"/>
</dbReference>
<dbReference type="GO" id="GO:0036099">
    <property type="term" value="P:female germ-line stem cell population maintenance"/>
    <property type="evidence" value="ECO:0000315"/>
    <property type="project" value="FlyBase"/>
</dbReference>
<dbReference type="GO" id="GO:0007143">
    <property type="term" value="P:female meiotic nuclear division"/>
    <property type="evidence" value="ECO:0000315"/>
    <property type="project" value="UniProtKB"/>
</dbReference>
<dbReference type="GO" id="GO:0060361">
    <property type="term" value="P:flight"/>
    <property type="evidence" value="ECO:0000315"/>
    <property type="project" value="UniProtKB"/>
</dbReference>
<dbReference type="GO" id="GO:0036098">
    <property type="term" value="P:male germ-line stem cell population maintenance"/>
    <property type="evidence" value="ECO:0000315"/>
    <property type="project" value="FlyBase"/>
</dbReference>
<dbReference type="GO" id="GO:0051321">
    <property type="term" value="P:meiotic cell cycle"/>
    <property type="evidence" value="ECO:0000315"/>
    <property type="project" value="UniProtKB"/>
</dbReference>
<dbReference type="GO" id="GO:0000070">
    <property type="term" value="P:mitotic sister chromatid segregation"/>
    <property type="evidence" value="ECO:0000315"/>
    <property type="project" value="UniProtKB"/>
</dbReference>
<dbReference type="GO" id="GO:0007052">
    <property type="term" value="P:mitotic spindle organization"/>
    <property type="evidence" value="ECO:0000315"/>
    <property type="project" value="UniProtKB"/>
</dbReference>
<dbReference type="GO" id="GO:0097150">
    <property type="term" value="P:neuronal stem cell population maintenance"/>
    <property type="evidence" value="ECO:0000315"/>
    <property type="project" value="FlyBase"/>
</dbReference>
<dbReference type="GO" id="GO:0030717">
    <property type="term" value="P:oocyte karyosome formation"/>
    <property type="evidence" value="ECO:0000315"/>
    <property type="project" value="FlyBase"/>
</dbReference>
<dbReference type="GO" id="GO:0043687">
    <property type="term" value="P:post-translational protein modification"/>
    <property type="evidence" value="ECO:0000314"/>
    <property type="project" value="FlyBase"/>
</dbReference>
<dbReference type="GO" id="GO:0045214">
    <property type="term" value="P:sarcomere organization"/>
    <property type="evidence" value="ECO:0000315"/>
    <property type="project" value="FlyBase"/>
</dbReference>
<dbReference type="GO" id="GO:0007165">
    <property type="term" value="P:signal transduction"/>
    <property type="evidence" value="ECO:0000318"/>
    <property type="project" value="GO_Central"/>
</dbReference>
<dbReference type="GO" id="GO:0007130">
    <property type="term" value="P:synaptonemal complex assembly"/>
    <property type="evidence" value="ECO:0000315"/>
    <property type="project" value="UniProtKB"/>
</dbReference>
<dbReference type="CDD" id="cd14015">
    <property type="entry name" value="STKc_VRK"/>
    <property type="match status" value="1"/>
</dbReference>
<dbReference type="FunFam" id="1.10.510.10:FF:000931">
    <property type="entry name" value="Ballchen, isoform B"/>
    <property type="match status" value="1"/>
</dbReference>
<dbReference type="Gene3D" id="1.10.510.10">
    <property type="entry name" value="Transferase(Phosphotransferase) domain 1"/>
    <property type="match status" value="1"/>
</dbReference>
<dbReference type="InterPro" id="IPR050235">
    <property type="entry name" value="CK1_Ser-Thr_kinase"/>
</dbReference>
<dbReference type="InterPro" id="IPR011009">
    <property type="entry name" value="Kinase-like_dom_sf"/>
</dbReference>
<dbReference type="InterPro" id="IPR000719">
    <property type="entry name" value="Prot_kinase_dom"/>
</dbReference>
<dbReference type="InterPro" id="IPR017441">
    <property type="entry name" value="Protein_kinase_ATP_BS"/>
</dbReference>
<dbReference type="InterPro" id="IPR008271">
    <property type="entry name" value="Ser/Thr_kinase_AS"/>
</dbReference>
<dbReference type="PANTHER" id="PTHR11909">
    <property type="entry name" value="CASEIN KINASE-RELATED"/>
    <property type="match status" value="1"/>
</dbReference>
<dbReference type="Pfam" id="PF00069">
    <property type="entry name" value="Pkinase"/>
    <property type="match status" value="1"/>
</dbReference>
<dbReference type="SMART" id="SM00220">
    <property type="entry name" value="S_TKc"/>
    <property type="match status" value="1"/>
</dbReference>
<dbReference type="SUPFAM" id="SSF56112">
    <property type="entry name" value="Protein kinase-like (PK-like)"/>
    <property type="match status" value="1"/>
</dbReference>
<dbReference type="PROSITE" id="PS00107">
    <property type="entry name" value="PROTEIN_KINASE_ATP"/>
    <property type="match status" value="1"/>
</dbReference>
<dbReference type="PROSITE" id="PS50011">
    <property type="entry name" value="PROTEIN_KINASE_DOM"/>
    <property type="match status" value="1"/>
</dbReference>
<dbReference type="PROSITE" id="PS00108">
    <property type="entry name" value="PROTEIN_KINASE_ST"/>
    <property type="match status" value="1"/>
</dbReference>
<name>NHK1_DROME</name>
<gene>
    <name type="primary">ball</name>
    <name type="synonym">ballchen</name>
    <name type="synonym">nhk-1</name>
    <name type="ORF">CG6386</name>
</gene>
<protein>
    <recommendedName>
        <fullName>Nucleosomal histone kinase 1</fullName>
        <ecNumber evidence="4">2.7.11.1</ecNumber>
    </recommendedName>
    <alternativeName>
        <fullName>Protein baellchen</fullName>
    </alternativeName>
</protein>
<accession>Q7KRY6</accession>
<accession>Q9U9Q0</accession>
<accession>Q9VBB2</accession>